<dbReference type="EC" id="6.3.4.20" evidence="1"/>
<dbReference type="EMBL" id="CP000390">
    <property type="protein sequence ID" value="ABG65420.1"/>
    <property type="molecule type" value="Genomic_DNA"/>
</dbReference>
<dbReference type="SMR" id="Q11B05"/>
<dbReference type="STRING" id="266779.Meso_4053"/>
<dbReference type="KEGG" id="mes:Meso_4053"/>
<dbReference type="eggNOG" id="COG0603">
    <property type="taxonomic scope" value="Bacteria"/>
</dbReference>
<dbReference type="HOGENOM" id="CLU_081854_1_0_5"/>
<dbReference type="OrthoDB" id="9789567at2"/>
<dbReference type="UniPathway" id="UPA00391"/>
<dbReference type="GO" id="GO:0005524">
    <property type="term" value="F:ATP binding"/>
    <property type="evidence" value="ECO:0007669"/>
    <property type="project" value="UniProtKB-UniRule"/>
</dbReference>
<dbReference type="GO" id="GO:0016879">
    <property type="term" value="F:ligase activity, forming carbon-nitrogen bonds"/>
    <property type="evidence" value="ECO:0007669"/>
    <property type="project" value="UniProtKB-UniRule"/>
</dbReference>
<dbReference type="GO" id="GO:0008270">
    <property type="term" value="F:zinc ion binding"/>
    <property type="evidence" value="ECO:0007669"/>
    <property type="project" value="UniProtKB-UniRule"/>
</dbReference>
<dbReference type="GO" id="GO:0008616">
    <property type="term" value="P:queuosine biosynthetic process"/>
    <property type="evidence" value="ECO:0007669"/>
    <property type="project" value="UniProtKB-UniRule"/>
</dbReference>
<dbReference type="CDD" id="cd01995">
    <property type="entry name" value="QueC-like"/>
    <property type="match status" value="1"/>
</dbReference>
<dbReference type="Gene3D" id="3.40.50.620">
    <property type="entry name" value="HUPs"/>
    <property type="match status" value="1"/>
</dbReference>
<dbReference type="HAMAP" id="MF_01633">
    <property type="entry name" value="QueC"/>
    <property type="match status" value="1"/>
</dbReference>
<dbReference type="InterPro" id="IPR018317">
    <property type="entry name" value="QueC"/>
</dbReference>
<dbReference type="InterPro" id="IPR014729">
    <property type="entry name" value="Rossmann-like_a/b/a_fold"/>
</dbReference>
<dbReference type="NCBIfam" id="TIGR00364">
    <property type="entry name" value="7-cyano-7-deazaguanine synthase QueC"/>
    <property type="match status" value="1"/>
</dbReference>
<dbReference type="PANTHER" id="PTHR42914">
    <property type="entry name" value="7-CYANO-7-DEAZAGUANINE SYNTHASE"/>
    <property type="match status" value="1"/>
</dbReference>
<dbReference type="PANTHER" id="PTHR42914:SF1">
    <property type="entry name" value="7-CYANO-7-DEAZAGUANINE SYNTHASE"/>
    <property type="match status" value="1"/>
</dbReference>
<dbReference type="Pfam" id="PF06508">
    <property type="entry name" value="QueC"/>
    <property type="match status" value="1"/>
</dbReference>
<dbReference type="PIRSF" id="PIRSF006293">
    <property type="entry name" value="ExsB"/>
    <property type="match status" value="1"/>
</dbReference>
<dbReference type="SUPFAM" id="SSF52402">
    <property type="entry name" value="Adenine nucleotide alpha hydrolases-like"/>
    <property type="match status" value="1"/>
</dbReference>
<proteinExistence type="inferred from homology"/>
<comment type="function">
    <text evidence="1">Catalyzes the ATP-dependent conversion of 7-carboxy-7-deazaguanine (CDG) to 7-cyano-7-deazaguanine (preQ(0)).</text>
</comment>
<comment type="catalytic activity">
    <reaction evidence="1">
        <text>7-carboxy-7-deazaguanine + NH4(+) + ATP = 7-cyano-7-deazaguanine + ADP + phosphate + H2O + H(+)</text>
        <dbReference type="Rhea" id="RHEA:27982"/>
        <dbReference type="ChEBI" id="CHEBI:15377"/>
        <dbReference type="ChEBI" id="CHEBI:15378"/>
        <dbReference type="ChEBI" id="CHEBI:28938"/>
        <dbReference type="ChEBI" id="CHEBI:30616"/>
        <dbReference type="ChEBI" id="CHEBI:43474"/>
        <dbReference type="ChEBI" id="CHEBI:45075"/>
        <dbReference type="ChEBI" id="CHEBI:61036"/>
        <dbReference type="ChEBI" id="CHEBI:456216"/>
        <dbReference type="EC" id="6.3.4.20"/>
    </reaction>
</comment>
<comment type="cofactor">
    <cofactor evidence="1">
        <name>Zn(2+)</name>
        <dbReference type="ChEBI" id="CHEBI:29105"/>
    </cofactor>
    <text evidence="1">Binds 1 zinc ion per subunit.</text>
</comment>
<comment type="pathway">
    <text evidence="1">Purine metabolism; 7-cyano-7-deazaguanine biosynthesis.</text>
</comment>
<comment type="similarity">
    <text evidence="1">Belongs to the QueC family.</text>
</comment>
<keyword id="KW-0067">ATP-binding</keyword>
<keyword id="KW-0436">Ligase</keyword>
<keyword id="KW-0479">Metal-binding</keyword>
<keyword id="KW-0547">Nucleotide-binding</keyword>
<keyword id="KW-0671">Queuosine biosynthesis</keyword>
<keyword id="KW-0862">Zinc</keyword>
<sequence>MKTFVICSGGLDSVSLAHKVAVEKTLAGLISFDYGQRHKKELDFARACAQRLDVRHMIIDIRAVGEGLAGSALTDEIDVPNGHYAEDTMRITVVPNRNAIMLAIAFGVAAAQNADAVATAVHGGDHFIYPDCRPGFIEAFQAMQAQALDGYAKIALYAPYVNLSKANIVSDGVRHRTPFEATWSCYKGGKHHCGRCGTCVERREAFDLAGVTDPTTYEDAAFWREAVARKAG</sequence>
<gene>
    <name evidence="1" type="primary">queC</name>
    <name type="ordered locus">Meso_4053</name>
</gene>
<protein>
    <recommendedName>
        <fullName evidence="1">7-cyano-7-deazaguanine synthase</fullName>
        <ecNumber evidence="1">6.3.4.20</ecNumber>
    </recommendedName>
    <alternativeName>
        <fullName evidence="1">7-cyano-7-carbaguanine synthase</fullName>
    </alternativeName>
    <alternativeName>
        <fullName evidence="1">PreQ(0) synthase</fullName>
    </alternativeName>
    <alternativeName>
        <fullName evidence="1">Queuosine biosynthesis protein QueC</fullName>
    </alternativeName>
</protein>
<organism>
    <name type="scientific">Chelativorans sp. (strain BNC1)</name>
    <dbReference type="NCBI Taxonomy" id="266779"/>
    <lineage>
        <taxon>Bacteria</taxon>
        <taxon>Pseudomonadati</taxon>
        <taxon>Pseudomonadota</taxon>
        <taxon>Alphaproteobacteria</taxon>
        <taxon>Hyphomicrobiales</taxon>
        <taxon>Phyllobacteriaceae</taxon>
        <taxon>Chelativorans</taxon>
    </lineage>
</organism>
<evidence type="ECO:0000255" key="1">
    <source>
        <dbReference type="HAMAP-Rule" id="MF_01633"/>
    </source>
</evidence>
<accession>Q11B05</accession>
<name>QUEC_CHESB</name>
<reference key="1">
    <citation type="submission" date="2006-06" db="EMBL/GenBank/DDBJ databases">
        <title>Complete sequence of chromosome of Mesorhizobium sp. BNC1.</title>
        <authorList>
            <consortium name="US DOE Joint Genome Institute"/>
            <person name="Copeland A."/>
            <person name="Lucas S."/>
            <person name="Lapidus A."/>
            <person name="Barry K."/>
            <person name="Detter J.C."/>
            <person name="Glavina del Rio T."/>
            <person name="Hammon N."/>
            <person name="Israni S."/>
            <person name="Dalin E."/>
            <person name="Tice H."/>
            <person name="Pitluck S."/>
            <person name="Chertkov O."/>
            <person name="Brettin T."/>
            <person name="Bruce D."/>
            <person name="Han C."/>
            <person name="Tapia R."/>
            <person name="Gilna P."/>
            <person name="Schmutz J."/>
            <person name="Larimer F."/>
            <person name="Land M."/>
            <person name="Hauser L."/>
            <person name="Kyrpides N."/>
            <person name="Mikhailova N."/>
            <person name="Richardson P."/>
        </authorList>
    </citation>
    <scope>NUCLEOTIDE SEQUENCE [LARGE SCALE GENOMIC DNA]</scope>
    <source>
        <strain>BNC1</strain>
    </source>
</reference>
<feature type="chain" id="PRO_0000255922" description="7-cyano-7-deazaguanine synthase">
    <location>
        <begin position="1"/>
        <end position="232"/>
    </location>
</feature>
<feature type="binding site" evidence="1">
    <location>
        <begin position="7"/>
        <end position="17"/>
    </location>
    <ligand>
        <name>ATP</name>
        <dbReference type="ChEBI" id="CHEBI:30616"/>
    </ligand>
</feature>
<feature type="binding site" evidence="1">
    <location>
        <position position="185"/>
    </location>
    <ligand>
        <name>Zn(2+)</name>
        <dbReference type="ChEBI" id="CHEBI:29105"/>
    </ligand>
</feature>
<feature type="binding site" evidence="1">
    <location>
        <position position="193"/>
    </location>
    <ligand>
        <name>Zn(2+)</name>
        <dbReference type="ChEBI" id="CHEBI:29105"/>
    </ligand>
</feature>
<feature type="binding site" evidence="1">
    <location>
        <position position="196"/>
    </location>
    <ligand>
        <name>Zn(2+)</name>
        <dbReference type="ChEBI" id="CHEBI:29105"/>
    </ligand>
</feature>
<feature type="binding site" evidence="1">
    <location>
        <position position="199"/>
    </location>
    <ligand>
        <name>Zn(2+)</name>
        <dbReference type="ChEBI" id="CHEBI:29105"/>
    </ligand>
</feature>